<proteinExistence type="evidence at protein level"/>
<name>IOLG_BACSU</name>
<accession>P26935</accession>
<accession>Q6B6R7</accession>
<evidence type="ECO:0000269" key="1">
    <source>
    </source>
</evidence>
<evidence type="ECO:0000269" key="2">
    <source>
    </source>
</evidence>
<evidence type="ECO:0000269" key="3">
    <source>
    </source>
</evidence>
<evidence type="ECO:0000305" key="4"/>
<evidence type="ECO:0007829" key="5">
    <source>
        <dbReference type="PDB" id="3MZ0"/>
    </source>
</evidence>
<evidence type="ECO:0007829" key="6">
    <source>
        <dbReference type="PDB" id="3NT2"/>
    </source>
</evidence>
<evidence type="ECO:0007829" key="7">
    <source>
        <dbReference type="PDB" id="3NTR"/>
    </source>
</evidence>
<protein>
    <recommendedName>
        <fullName>Inositol 2-dehydrogenase/D-chiro-inositol 3-dehydrogenase</fullName>
        <ecNumber>1.1.1.18</ecNumber>
        <ecNumber>1.1.1.369</ecNumber>
    </recommendedName>
    <alternativeName>
        <fullName>Myo-inositol 2-dehydrogenase/D-chiro-inositol 3-dehydrogenase</fullName>
        <shortName>MI 2-dehydrogenase/DCI 3-dehydrogenase</shortName>
    </alternativeName>
</protein>
<dbReference type="EC" id="1.1.1.18"/>
<dbReference type="EC" id="1.1.1.369"/>
<dbReference type="EMBL" id="M76431">
    <property type="protein sequence ID" value="AAA22543.1"/>
    <property type="molecule type" value="Genomic_DNA"/>
</dbReference>
<dbReference type="EMBL" id="D14399">
    <property type="protein sequence ID" value="BAA03296.1"/>
    <property type="molecule type" value="Genomic_DNA"/>
</dbReference>
<dbReference type="EMBL" id="AY676876">
    <property type="protein sequence ID" value="AAT78431.1"/>
    <property type="molecule type" value="Genomic_DNA"/>
</dbReference>
<dbReference type="EMBL" id="AL009126">
    <property type="protein sequence ID" value="CAB16006.2"/>
    <property type="molecule type" value="Genomic_DNA"/>
</dbReference>
<dbReference type="PIR" id="JH0511">
    <property type="entry name" value="JH0511"/>
</dbReference>
<dbReference type="RefSeq" id="NP_391849.2">
    <property type="nucleotide sequence ID" value="NC_000964.3"/>
</dbReference>
<dbReference type="RefSeq" id="WP_003244482.1">
    <property type="nucleotide sequence ID" value="NZ_OZ025638.1"/>
</dbReference>
<dbReference type="PDB" id="3MZ0">
    <property type="method" value="X-ray"/>
    <property type="resolution" value="1.54 A"/>
    <property type="chains" value="A=1-344"/>
</dbReference>
<dbReference type="PDB" id="3NT2">
    <property type="method" value="X-ray"/>
    <property type="resolution" value="2.30 A"/>
    <property type="chains" value="A/B=1-344"/>
</dbReference>
<dbReference type="PDB" id="3NT4">
    <property type="method" value="X-ray"/>
    <property type="resolution" value="2.50 A"/>
    <property type="chains" value="A/B=1-344"/>
</dbReference>
<dbReference type="PDB" id="3NT5">
    <property type="method" value="X-ray"/>
    <property type="resolution" value="2.90 A"/>
    <property type="chains" value="A/B=1-344"/>
</dbReference>
<dbReference type="PDB" id="3NTO">
    <property type="method" value="X-ray"/>
    <property type="resolution" value="1.91 A"/>
    <property type="chains" value="A=1-344"/>
</dbReference>
<dbReference type="PDB" id="3NTQ">
    <property type="method" value="X-ray"/>
    <property type="resolution" value="2.60 A"/>
    <property type="chains" value="A/B=1-344"/>
</dbReference>
<dbReference type="PDB" id="3NTR">
    <property type="method" value="X-ray"/>
    <property type="resolution" value="2.65 A"/>
    <property type="chains" value="A/B=1-344"/>
</dbReference>
<dbReference type="PDB" id="4L8V">
    <property type="method" value="X-ray"/>
    <property type="resolution" value="2.09 A"/>
    <property type="chains" value="A/B/C/D=1-337"/>
</dbReference>
<dbReference type="PDB" id="4L9R">
    <property type="method" value="X-ray"/>
    <property type="resolution" value="1.95 A"/>
    <property type="chains" value="A=1-337"/>
</dbReference>
<dbReference type="PDBsum" id="3MZ0"/>
<dbReference type="PDBsum" id="3NT2"/>
<dbReference type="PDBsum" id="3NT4"/>
<dbReference type="PDBsum" id="3NT5"/>
<dbReference type="PDBsum" id="3NTO"/>
<dbReference type="PDBsum" id="3NTQ"/>
<dbReference type="PDBsum" id="3NTR"/>
<dbReference type="PDBsum" id="4L8V"/>
<dbReference type="PDBsum" id="4L9R"/>
<dbReference type="SMR" id="P26935"/>
<dbReference type="FunCoup" id="P26935">
    <property type="interactions" value="65"/>
</dbReference>
<dbReference type="STRING" id="224308.BSU39700"/>
<dbReference type="PaxDb" id="224308-BSU39700"/>
<dbReference type="EnsemblBacteria" id="CAB16006">
    <property type="protein sequence ID" value="CAB16006"/>
    <property type="gene ID" value="BSU_39700"/>
</dbReference>
<dbReference type="GeneID" id="937615"/>
<dbReference type="KEGG" id="bsu:BSU39700"/>
<dbReference type="PATRIC" id="fig|224308.179.peg.4295"/>
<dbReference type="eggNOG" id="COG0673">
    <property type="taxonomic scope" value="Bacteria"/>
</dbReference>
<dbReference type="InParanoid" id="P26935"/>
<dbReference type="OrthoDB" id="9815825at2"/>
<dbReference type="PhylomeDB" id="P26935"/>
<dbReference type="BioCyc" id="BSUB:BSU39700-MONOMER"/>
<dbReference type="BioCyc" id="MetaCyc:BSU39700-MONOMER"/>
<dbReference type="BRENDA" id="1.1.1.18">
    <property type="organism ID" value="658"/>
</dbReference>
<dbReference type="BRENDA" id="1.1.1.369">
    <property type="organism ID" value="658"/>
</dbReference>
<dbReference type="SABIO-RK" id="P26935"/>
<dbReference type="UniPathway" id="UPA00076">
    <property type="reaction ID" value="UER00143"/>
</dbReference>
<dbReference type="EvolutionaryTrace" id="P26935"/>
<dbReference type="Proteomes" id="UP000001570">
    <property type="component" value="Chromosome"/>
</dbReference>
<dbReference type="GO" id="GO:0050112">
    <property type="term" value="F:inositol 2-dehydrogenase (NAD+) activity"/>
    <property type="evidence" value="ECO:0007669"/>
    <property type="project" value="UniProtKB-UniRule"/>
</dbReference>
<dbReference type="GO" id="GO:0000166">
    <property type="term" value="F:nucleotide binding"/>
    <property type="evidence" value="ECO:0007669"/>
    <property type="project" value="InterPro"/>
</dbReference>
<dbReference type="GO" id="GO:0019310">
    <property type="term" value="P:inositol catabolic process"/>
    <property type="evidence" value="ECO:0007669"/>
    <property type="project" value="UniProtKB-UniRule"/>
</dbReference>
<dbReference type="Gene3D" id="3.30.360.10">
    <property type="entry name" value="Dihydrodipicolinate Reductase, domain 2"/>
    <property type="match status" value="1"/>
</dbReference>
<dbReference type="Gene3D" id="3.40.50.720">
    <property type="entry name" value="NAD(P)-binding Rossmann-like Domain"/>
    <property type="match status" value="1"/>
</dbReference>
<dbReference type="HAMAP" id="MF_01671">
    <property type="entry name" value="IolG"/>
    <property type="match status" value="1"/>
</dbReference>
<dbReference type="InterPro" id="IPR050424">
    <property type="entry name" value="Gfo-Idh-MocA_inositol_DH"/>
</dbReference>
<dbReference type="InterPro" id="IPR004104">
    <property type="entry name" value="Gfo/Idh/MocA-like_OxRdtase_C"/>
</dbReference>
<dbReference type="InterPro" id="IPR000683">
    <property type="entry name" value="Gfo/Idh/MocA-like_OxRdtase_N"/>
</dbReference>
<dbReference type="InterPro" id="IPR023794">
    <property type="entry name" value="MI/DCI_dehydrogenase"/>
</dbReference>
<dbReference type="InterPro" id="IPR036291">
    <property type="entry name" value="NAD(P)-bd_dom_sf"/>
</dbReference>
<dbReference type="PANTHER" id="PTHR43593">
    <property type="match status" value="1"/>
</dbReference>
<dbReference type="PANTHER" id="PTHR43593:SF1">
    <property type="entry name" value="INOSITOL 2-DEHYDROGENASE"/>
    <property type="match status" value="1"/>
</dbReference>
<dbReference type="Pfam" id="PF01408">
    <property type="entry name" value="GFO_IDH_MocA"/>
    <property type="match status" value="1"/>
</dbReference>
<dbReference type="Pfam" id="PF02894">
    <property type="entry name" value="GFO_IDH_MocA_C"/>
    <property type="match status" value="1"/>
</dbReference>
<dbReference type="SUPFAM" id="SSF55347">
    <property type="entry name" value="Glyceraldehyde-3-phosphate dehydrogenase-like, C-terminal domain"/>
    <property type="match status" value="1"/>
</dbReference>
<dbReference type="SUPFAM" id="SSF51735">
    <property type="entry name" value="NAD(P)-binding Rossmann-fold domains"/>
    <property type="match status" value="1"/>
</dbReference>
<comment type="function">
    <text evidence="1 2">Involved in the oxidation of myo-inositol (MI) and D-chiro-inositol (DCI) to 2-keto-myo-inositol (2KMI or 2-inosose) and 1-keto-D-chiro-inositol (1KDCI), respectively. Can also use D-glucose and D-xylose, and shows a trace of activity with D-ribose and D-fructose.</text>
</comment>
<comment type="catalytic activity">
    <reaction evidence="2">
        <text>myo-inositol + NAD(+) = scyllo-inosose + NADH + H(+)</text>
        <dbReference type="Rhea" id="RHEA:16949"/>
        <dbReference type="ChEBI" id="CHEBI:15378"/>
        <dbReference type="ChEBI" id="CHEBI:17268"/>
        <dbReference type="ChEBI" id="CHEBI:17811"/>
        <dbReference type="ChEBI" id="CHEBI:57540"/>
        <dbReference type="ChEBI" id="CHEBI:57945"/>
        <dbReference type="EC" id="1.1.1.18"/>
    </reaction>
</comment>
<comment type="catalytic activity">
    <reaction evidence="2">
        <text>1D-chiro-inositol + NAD(+) = scyllo-inosine + NADH + H(+)</text>
        <dbReference type="Rhea" id="RHEA:25832"/>
        <dbReference type="ChEBI" id="CHEBI:15378"/>
        <dbReference type="ChEBI" id="CHEBI:27372"/>
        <dbReference type="ChEBI" id="CHEBI:50920"/>
        <dbReference type="ChEBI" id="CHEBI:57540"/>
        <dbReference type="ChEBI" id="CHEBI:57945"/>
        <dbReference type="EC" id="1.1.1.369"/>
    </reaction>
</comment>
<comment type="biophysicochemical properties">
    <kinetics>
        <KM evidence="1">0.036 mM for NADH (in the presence of 5 mM 2-inosose at 25 degrees Celsius and pH 7)</KM>
        <KM evidence="1">0.23 mM for NAD (in the presence of 40 mM myo-inositol at 25 degrees Celsius and pH 9)</KM>
        <KM evidence="1">1.61 mM for 2-inosose (in the presence of 0.1 mM NADH at 25 degrees Celsius and pH 7)</KM>
        <KM evidence="1">18.2 mM for myo-inositol (in the presence of 0.5 mM NAD at 25 degrees Celsius and pH 9)</KM>
        <KM evidence="1">55.6 mM for alpha-D-glucose (in the presence of 0.5 mM NAD at 25 degrees Celsius and pH 9)</KM>
        <KM evidence="1">167 mM for D-glucose (in the presence of 0.5 mM NAD at 25 degrees Celsius and pH 9)</KM>
        <KM evidence="1">190 mM for D-xylose (in the presence of 0.5 mM NAD at 25 degrees Celsius and pH 9)</KM>
        <Vmax evidence="1">42.0 umol/min/mg enzyme for 2-inosose reduction reaction (at 25 degrees Celsius and pH 7)</Vmax>
        <Vmax evidence="1">21.0 umol/min/mg enzyme for myo-inositol oxidation reaction (at 25 degrees Celsius and pH 9)</Vmax>
        <Vmax evidence="1">13.5 umol/min/mg enzyme with for alpha-D-glucose oxidation reaction (at 25 degrees Celsius and pH 9)</Vmax>
        <Vmax evidence="1">7.3 umol/min/mg enzyme for D-glucose oxidation reaction (at 25 degrees Celsius and pH 9)</Vmax>
        <Vmax evidence="1">6.7 umol/min/mg enzyme for D-xylose oxidation reaction (at 25 degrees Celsius and pH 9)</Vmax>
    </kinetics>
    <phDependence>
        <text evidence="1">Optimum pH is 9.5 for inositol 2-dehydrogenase activity.</text>
    </phDependence>
</comment>
<comment type="pathway">
    <text>Polyol metabolism; myo-inositol degradation into acetyl-CoA; acetyl-CoA from myo-inositol: step 1/7.</text>
</comment>
<comment type="subunit">
    <text evidence="1">Homotetramer.</text>
</comment>
<comment type="induction">
    <text evidence="3">By inositol. Subjected to catabolite repression.</text>
</comment>
<comment type="similarity">
    <text evidence="4">Belongs to the Gfo/Idh/MocA family.</text>
</comment>
<keyword id="KW-0002">3D-structure</keyword>
<keyword id="KW-0520">NAD</keyword>
<keyword id="KW-0560">Oxidoreductase</keyword>
<keyword id="KW-1185">Reference proteome</keyword>
<feature type="chain" id="PRO_0000091774" description="Inositol 2-dehydrogenase/D-chiro-inositol 3-dehydrogenase">
    <location>
        <begin position="1"/>
        <end position="344"/>
    </location>
</feature>
<feature type="sequence conflict" description="In Ref. 1; AAA22543 and 2; BAA03296." evidence="4" ref="1 2">
    <original>I</original>
    <variation>N</variation>
    <location>
        <position position="145"/>
    </location>
</feature>
<feature type="strand" evidence="5">
    <location>
        <begin position="3"/>
        <end position="8"/>
    </location>
</feature>
<feature type="helix" evidence="5">
    <location>
        <begin position="12"/>
        <end position="23"/>
    </location>
</feature>
<feature type="strand" evidence="5">
    <location>
        <begin position="26"/>
        <end position="34"/>
    </location>
</feature>
<feature type="helix" evidence="5">
    <location>
        <begin position="38"/>
        <end position="47"/>
    </location>
</feature>
<feature type="strand" evidence="5">
    <location>
        <begin position="53"/>
        <end position="57"/>
    </location>
</feature>
<feature type="helix" evidence="5">
    <location>
        <begin position="58"/>
        <end position="63"/>
    </location>
</feature>
<feature type="strand" evidence="5">
    <location>
        <begin position="69"/>
        <end position="72"/>
    </location>
</feature>
<feature type="helix" evidence="5">
    <location>
        <begin position="76"/>
        <end position="78"/>
    </location>
</feature>
<feature type="helix" evidence="5">
    <location>
        <begin position="79"/>
        <end position="88"/>
    </location>
</feature>
<feature type="strand" evidence="5">
    <location>
        <begin position="92"/>
        <end position="95"/>
    </location>
</feature>
<feature type="helix" evidence="5">
    <location>
        <begin position="103"/>
        <end position="116"/>
    </location>
</feature>
<feature type="strand" evidence="5">
    <location>
        <begin position="121"/>
        <end position="123"/>
    </location>
</feature>
<feature type="helix" evidence="5">
    <location>
        <begin position="126"/>
        <end position="129"/>
    </location>
</feature>
<feature type="helix" evidence="5">
    <location>
        <begin position="131"/>
        <end position="141"/>
    </location>
</feature>
<feature type="turn" evidence="5">
    <location>
        <begin position="142"/>
        <end position="145"/>
    </location>
</feature>
<feature type="strand" evidence="5">
    <location>
        <begin position="146"/>
        <end position="156"/>
    </location>
</feature>
<feature type="helix" evidence="5">
    <location>
        <begin position="168"/>
        <end position="171"/>
    </location>
</feature>
<feature type="turn" evidence="5">
    <location>
        <begin position="172"/>
        <end position="174"/>
    </location>
</feature>
<feature type="helix" evidence="5">
    <location>
        <begin position="175"/>
        <end position="185"/>
    </location>
</feature>
<feature type="strand" evidence="5">
    <location>
        <begin position="189"/>
        <end position="195"/>
    </location>
</feature>
<feature type="strand" evidence="7">
    <location>
        <begin position="201"/>
        <end position="203"/>
    </location>
</feature>
<feature type="strand" evidence="5">
    <location>
        <begin position="210"/>
        <end position="217"/>
    </location>
</feature>
<feature type="strand" evidence="5">
    <location>
        <begin position="222"/>
        <end position="228"/>
    </location>
</feature>
<feature type="strand" evidence="5">
    <location>
        <begin position="236"/>
        <end position="245"/>
    </location>
</feature>
<feature type="strand" evidence="5">
    <location>
        <begin position="247"/>
        <end position="249"/>
    </location>
</feature>
<feature type="strand" evidence="5">
    <location>
        <begin position="257"/>
        <end position="260"/>
    </location>
</feature>
<feature type="strand" evidence="5">
    <location>
        <begin position="263"/>
        <end position="266"/>
    </location>
</feature>
<feature type="helix" evidence="5">
    <location>
        <begin position="272"/>
        <end position="275"/>
    </location>
</feature>
<feature type="helix" evidence="5">
    <location>
        <begin position="277"/>
        <end position="294"/>
    </location>
</feature>
<feature type="helix" evidence="5">
    <location>
        <begin position="302"/>
        <end position="321"/>
    </location>
</feature>
<feature type="strand" evidence="6">
    <location>
        <begin position="323"/>
        <end position="326"/>
    </location>
</feature>
<feature type="helix" evidence="5">
    <location>
        <begin position="334"/>
        <end position="336"/>
    </location>
</feature>
<organism>
    <name type="scientific">Bacillus subtilis (strain 168)</name>
    <dbReference type="NCBI Taxonomy" id="224308"/>
    <lineage>
        <taxon>Bacteria</taxon>
        <taxon>Bacillati</taxon>
        <taxon>Bacillota</taxon>
        <taxon>Bacilli</taxon>
        <taxon>Bacillales</taxon>
        <taxon>Bacillaceae</taxon>
        <taxon>Bacillus</taxon>
    </lineage>
</organism>
<sequence>MSLRIGVIGTGAIGKEHINRITNKLSGAEIVAVTDVNQEAAQKVVEQYQLNATVYPNDDSLLADENVDAVLVTSWGPAHESSVLKAIKAQKYVFCEKPLATTAEGCMRIVEEEIKVGKRLVQVGFMRRYDSGYVQLKEALDNHVIGEPLMIHCAHRNPTVGDNYTTDMAVVDTLVHEIDVLHWLVNDDYESVQVIYPKKSKNALPHLKDPQIVVIETKGGIVINAEIYVNCKYGYDIQCEIVGEDGIIKLPEPSSISLRKEGRFSTDILMDWQRRFVAAYDVEIQDFIDSIQKKGEVSGPTAWDGYIAAVTTDACVKAQESGQKEKVELKEKPEFYQSFTTVQN</sequence>
<gene>
    <name type="primary">iolG</name>
    <name type="synonym">idh</name>
    <name type="ordered locus">BSU39700</name>
    <name type="ORF">E83G</name>
</gene>
<reference key="1">
    <citation type="journal article" date="1991" name="Gene">
        <title>Bacillus subtilis inositol dehydrogenase-encoding gene (idh): sequence and expression in Escherichia coli.</title>
        <authorList>
            <person name="Fujita Y."/>
            <person name="Shindo K."/>
            <person name="Miwa Y."/>
            <person name="Yoshida K."/>
        </authorList>
    </citation>
    <scope>NUCLEOTIDE SEQUENCE [GENOMIC DNA]</scope>
    <scope>INDUCTION</scope>
    <source>
        <strain>168 / 60015</strain>
    </source>
</reference>
<reference key="2">
    <citation type="journal article" date="1994" name="Microbiology">
        <title>Cloning and nucleotide sequencing of a 15 kb region of the Bacillus subtilis genome containing the iol operon.</title>
        <authorList>
            <person name="Yoshida K."/>
            <person name="Sano H."/>
            <person name="Miwa Y."/>
            <person name="Ogasawara N."/>
            <person name="Fujita Y."/>
        </authorList>
    </citation>
    <scope>NUCLEOTIDE SEQUENCE [GENOMIC DNA]</scope>
    <source>
        <strain>168 / BGSC1A1</strain>
    </source>
</reference>
<reference key="3">
    <citation type="submission" date="2004-07" db="EMBL/GenBank/DDBJ databases">
        <title>Probing the active site of Bacillus subtilis myo-inositol dehydrogenase.</title>
        <authorList>
            <person name="Daniellou R."/>
            <person name="Phenix C.P."/>
            <person name="Tam P.H."/>
            <person name="Laliberte M.C."/>
            <person name="Palmer D.R.J."/>
        </authorList>
    </citation>
    <scope>NUCLEOTIDE SEQUENCE [GENOMIC DNA]</scope>
    <source>
        <strain>168</strain>
    </source>
</reference>
<reference key="4">
    <citation type="journal article" date="1997" name="Nature">
        <title>The complete genome sequence of the Gram-positive bacterium Bacillus subtilis.</title>
        <authorList>
            <person name="Kunst F."/>
            <person name="Ogasawara N."/>
            <person name="Moszer I."/>
            <person name="Albertini A.M."/>
            <person name="Alloni G."/>
            <person name="Azevedo V."/>
            <person name="Bertero M.G."/>
            <person name="Bessieres P."/>
            <person name="Bolotin A."/>
            <person name="Borchert S."/>
            <person name="Borriss R."/>
            <person name="Boursier L."/>
            <person name="Brans A."/>
            <person name="Braun M."/>
            <person name="Brignell S.C."/>
            <person name="Bron S."/>
            <person name="Brouillet S."/>
            <person name="Bruschi C.V."/>
            <person name="Caldwell B."/>
            <person name="Capuano V."/>
            <person name="Carter N.M."/>
            <person name="Choi S.-K."/>
            <person name="Codani J.-J."/>
            <person name="Connerton I.F."/>
            <person name="Cummings N.J."/>
            <person name="Daniel R.A."/>
            <person name="Denizot F."/>
            <person name="Devine K.M."/>
            <person name="Duesterhoeft A."/>
            <person name="Ehrlich S.D."/>
            <person name="Emmerson P.T."/>
            <person name="Entian K.-D."/>
            <person name="Errington J."/>
            <person name="Fabret C."/>
            <person name="Ferrari E."/>
            <person name="Foulger D."/>
            <person name="Fritz C."/>
            <person name="Fujita M."/>
            <person name="Fujita Y."/>
            <person name="Fuma S."/>
            <person name="Galizzi A."/>
            <person name="Galleron N."/>
            <person name="Ghim S.-Y."/>
            <person name="Glaser P."/>
            <person name="Goffeau A."/>
            <person name="Golightly E.J."/>
            <person name="Grandi G."/>
            <person name="Guiseppi G."/>
            <person name="Guy B.J."/>
            <person name="Haga K."/>
            <person name="Haiech J."/>
            <person name="Harwood C.R."/>
            <person name="Henaut A."/>
            <person name="Hilbert H."/>
            <person name="Holsappel S."/>
            <person name="Hosono S."/>
            <person name="Hullo M.-F."/>
            <person name="Itaya M."/>
            <person name="Jones L.-M."/>
            <person name="Joris B."/>
            <person name="Karamata D."/>
            <person name="Kasahara Y."/>
            <person name="Klaerr-Blanchard M."/>
            <person name="Klein C."/>
            <person name="Kobayashi Y."/>
            <person name="Koetter P."/>
            <person name="Koningstein G."/>
            <person name="Krogh S."/>
            <person name="Kumano M."/>
            <person name="Kurita K."/>
            <person name="Lapidus A."/>
            <person name="Lardinois S."/>
            <person name="Lauber J."/>
            <person name="Lazarevic V."/>
            <person name="Lee S.-M."/>
            <person name="Levine A."/>
            <person name="Liu H."/>
            <person name="Masuda S."/>
            <person name="Mauel C."/>
            <person name="Medigue C."/>
            <person name="Medina N."/>
            <person name="Mellado R.P."/>
            <person name="Mizuno M."/>
            <person name="Moestl D."/>
            <person name="Nakai S."/>
            <person name="Noback M."/>
            <person name="Noone D."/>
            <person name="O'Reilly M."/>
            <person name="Ogawa K."/>
            <person name="Ogiwara A."/>
            <person name="Oudega B."/>
            <person name="Park S.-H."/>
            <person name="Parro V."/>
            <person name="Pohl T.M."/>
            <person name="Portetelle D."/>
            <person name="Porwollik S."/>
            <person name="Prescott A.M."/>
            <person name="Presecan E."/>
            <person name="Pujic P."/>
            <person name="Purnelle B."/>
            <person name="Rapoport G."/>
            <person name="Rey M."/>
            <person name="Reynolds S."/>
            <person name="Rieger M."/>
            <person name="Rivolta C."/>
            <person name="Rocha E."/>
            <person name="Roche B."/>
            <person name="Rose M."/>
            <person name="Sadaie Y."/>
            <person name="Sato T."/>
            <person name="Scanlan E."/>
            <person name="Schleich S."/>
            <person name="Schroeter R."/>
            <person name="Scoffone F."/>
            <person name="Sekiguchi J."/>
            <person name="Sekowska A."/>
            <person name="Seror S.J."/>
            <person name="Serror P."/>
            <person name="Shin B.-S."/>
            <person name="Soldo B."/>
            <person name="Sorokin A."/>
            <person name="Tacconi E."/>
            <person name="Takagi T."/>
            <person name="Takahashi H."/>
            <person name="Takemaru K."/>
            <person name="Takeuchi M."/>
            <person name="Tamakoshi A."/>
            <person name="Tanaka T."/>
            <person name="Terpstra P."/>
            <person name="Tognoni A."/>
            <person name="Tosato V."/>
            <person name="Uchiyama S."/>
            <person name="Vandenbol M."/>
            <person name="Vannier F."/>
            <person name="Vassarotti A."/>
            <person name="Viari A."/>
            <person name="Wambutt R."/>
            <person name="Wedler E."/>
            <person name="Wedler H."/>
            <person name="Weitzenegger T."/>
            <person name="Winters P."/>
            <person name="Wipat A."/>
            <person name="Yamamoto H."/>
            <person name="Yamane K."/>
            <person name="Yasumoto K."/>
            <person name="Yata K."/>
            <person name="Yoshida K."/>
            <person name="Yoshikawa H.-F."/>
            <person name="Zumstein E."/>
            <person name="Yoshikawa H."/>
            <person name="Danchin A."/>
        </authorList>
    </citation>
    <scope>NUCLEOTIDE SEQUENCE [LARGE SCALE GENOMIC DNA]</scope>
    <source>
        <strain>168</strain>
    </source>
</reference>
<reference key="5">
    <citation type="journal article" date="2009" name="Microbiology">
        <title>From a consortium sequence to a unified sequence: the Bacillus subtilis 168 reference genome a decade later.</title>
        <authorList>
            <person name="Barbe V."/>
            <person name="Cruveiller S."/>
            <person name="Kunst F."/>
            <person name="Lenoble P."/>
            <person name="Meurice G."/>
            <person name="Sekowska A."/>
            <person name="Vallenet D."/>
            <person name="Wang T."/>
            <person name="Moszer I."/>
            <person name="Medigue C."/>
            <person name="Danchin A."/>
        </authorList>
    </citation>
    <scope>SEQUENCE REVISION TO 145</scope>
</reference>
<reference key="6">
    <citation type="journal article" date="1979" name="J. Biol. Chem.">
        <title>Purification and properties of Bacillus subtilis inositol dehydrogenase.</title>
        <authorList>
            <person name="Ramaley R."/>
            <person name="Fujita Y."/>
            <person name="Freese E."/>
        </authorList>
    </citation>
    <scope>FUNCTION</scope>
    <scope>BIOPHYSICOCHEMICAL PROPERTIES</scope>
    <scope>SUBUNIT</scope>
    <source>
        <strain>168 / 60015</strain>
    </source>
</reference>
<reference key="7">
    <citation type="journal article" date="2006" name="Appl. Environ. Microbiol.">
        <title>Genetic modification of Bacillus subtilis for production of D-chiro-inositol, an investigational drug candidate for treatment of type 2 diabetes and polycystic ovary syndrome.</title>
        <authorList>
            <person name="Yoshida K."/>
            <person name="Yamaguchi M."/>
            <person name="Morinaga T."/>
            <person name="Ikeuchi M."/>
            <person name="Kinehara M."/>
            <person name="Ashida H."/>
        </authorList>
    </citation>
    <scope>FUNCTION</scope>
    <scope>CATALYTIC ACTIVITY</scope>
    <source>
        <strain>168 / 60015</strain>
    </source>
</reference>